<feature type="propeptide" id="PRO_0000456827" evidence="11">
    <location>
        <begin position="1"/>
        <end position="258"/>
    </location>
</feature>
<feature type="chain" id="PRO_0000456828" description="Aspartic protease 1">
    <location>
        <begin position="259"/>
        <end position="620"/>
    </location>
</feature>
<feature type="topological domain" description="Cytoplasmic" evidence="5">
    <location>
        <begin position="1"/>
        <end position="110"/>
    </location>
</feature>
<feature type="transmembrane region" description="Helical; Signal-anchor for type II membrane protein" evidence="1">
    <location>
        <begin position="111"/>
        <end position="131"/>
    </location>
</feature>
<feature type="topological domain" description="Lumenal" evidence="5">
    <location>
        <begin position="132"/>
        <end position="620"/>
    </location>
</feature>
<feature type="domain" description="Peptidase A1" evidence="2">
    <location>
        <begin position="275"/>
        <end position="616"/>
    </location>
</feature>
<feature type="region of interest" description="Important for proper cellular trafficking" evidence="5">
    <location>
        <begin position="27"/>
        <end position="31"/>
    </location>
</feature>
<feature type="region of interest" description="Disordered" evidence="4">
    <location>
        <begin position="138"/>
        <end position="174"/>
    </location>
</feature>
<feature type="compositionally biased region" description="Polar residues" evidence="4">
    <location>
        <begin position="156"/>
        <end position="165"/>
    </location>
</feature>
<feature type="active site" evidence="2">
    <location>
        <position position="293"/>
    </location>
</feature>
<feature type="active site" evidence="2">
    <location>
        <position position="476"/>
    </location>
</feature>
<feature type="disulfide bond" evidence="2">
    <location>
        <begin position="513"/>
        <end position="550"/>
    </location>
</feature>
<feature type="mutagenesis site" description="In tachyzoites, abnormal accumulation in the Golgi apparatus." evidence="5">
    <original>YASLL</original>
    <variation>AASAA</variation>
    <location>
        <begin position="27"/>
        <end position="31"/>
    </location>
</feature>
<proteinExistence type="evidence at protein level"/>
<protein>
    <recommendedName>
        <fullName evidence="9">Aspartic protease 1</fullName>
        <shortName evidence="9">TgASP1</shortName>
        <ecNumber evidence="10">3.4.23.-</ecNumber>
    </recommendedName>
    <alternativeName>
        <fullName evidence="8">Toxomepsin 1</fullName>
    </alternativeName>
</protein>
<name>ASP1_TOXGO</name>
<dbReference type="EC" id="3.4.23.-" evidence="10"/>
<dbReference type="EMBL" id="AY580011">
    <property type="protein sequence ID" value="AAS90335.1"/>
    <property type="molecule type" value="mRNA"/>
</dbReference>
<dbReference type="SMR" id="Q6PTV2"/>
<dbReference type="MEROPS" id="A01.087"/>
<dbReference type="VEuPathDB" id="ToxoDB:TGARI_201840"/>
<dbReference type="VEuPathDB" id="ToxoDB:TGCAST_201840"/>
<dbReference type="VEuPathDB" id="ToxoDB:TGCOUG_201840"/>
<dbReference type="VEuPathDB" id="ToxoDB:TGDOM2_201840"/>
<dbReference type="VEuPathDB" id="ToxoDB:TGFOU_201840"/>
<dbReference type="VEuPathDB" id="ToxoDB:TGGT1_201840"/>
<dbReference type="VEuPathDB" id="ToxoDB:TGMAS_201840"/>
<dbReference type="VEuPathDB" id="ToxoDB:TGME49_201840"/>
<dbReference type="VEuPathDB" id="ToxoDB:TGP89_201840"/>
<dbReference type="VEuPathDB" id="ToxoDB:TGPRC2_201840"/>
<dbReference type="VEuPathDB" id="ToxoDB:TGRH88_037100"/>
<dbReference type="VEuPathDB" id="ToxoDB:TGRUB_201840"/>
<dbReference type="VEuPathDB" id="ToxoDB:TGVAND_201840"/>
<dbReference type="VEuPathDB" id="ToxoDB:TGVEG_201840"/>
<dbReference type="GO" id="GO:0016020">
    <property type="term" value="C:membrane"/>
    <property type="evidence" value="ECO:0007669"/>
    <property type="project" value="UniProtKB-SubCell"/>
</dbReference>
<dbReference type="GO" id="GO:0005773">
    <property type="term" value="C:vacuole"/>
    <property type="evidence" value="ECO:0007669"/>
    <property type="project" value="UniProtKB-SubCell"/>
</dbReference>
<dbReference type="GO" id="GO:0004190">
    <property type="term" value="F:aspartic-type endopeptidase activity"/>
    <property type="evidence" value="ECO:0007669"/>
    <property type="project" value="UniProtKB-KW"/>
</dbReference>
<dbReference type="GO" id="GO:0006508">
    <property type="term" value="P:proteolysis"/>
    <property type="evidence" value="ECO:0007669"/>
    <property type="project" value="UniProtKB-KW"/>
</dbReference>
<dbReference type="FunFam" id="2.40.70.10:FF:000115">
    <property type="entry name" value="Lysosomal aspartic protease"/>
    <property type="match status" value="1"/>
</dbReference>
<dbReference type="Gene3D" id="2.40.70.10">
    <property type="entry name" value="Acid Proteases"/>
    <property type="match status" value="2"/>
</dbReference>
<dbReference type="InterPro" id="IPR001461">
    <property type="entry name" value="Aspartic_peptidase_A1"/>
</dbReference>
<dbReference type="InterPro" id="IPR001969">
    <property type="entry name" value="Aspartic_peptidase_AS"/>
</dbReference>
<dbReference type="InterPro" id="IPR033121">
    <property type="entry name" value="PEPTIDASE_A1"/>
</dbReference>
<dbReference type="InterPro" id="IPR021109">
    <property type="entry name" value="Peptidase_aspartic_dom_sf"/>
</dbReference>
<dbReference type="PANTHER" id="PTHR47966">
    <property type="entry name" value="BETA-SITE APP-CLEAVING ENZYME, ISOFORM A-RELATED"/>
    <property type="match status" value="1"/>
</dbReference>
<dbReference type="PANTHER" id="PTHR47966:SF51">
    <property type="entry name" value="BETA-SITE APP-CLEAVING ENZYME, ISOFORM A-RELATED"/>
    <property type="match status" value="1"/>
</dbReference>
<dbReference type="Pfam" id="PF00026">
    <property type="entry name" value="Asp"/>
    <property type="match status" value="1"/>
</dbReference>
<dbReference type="PRINTS" id="PR00792">
    <property type="entry name" value="PEPSIN"/>
</dbReference>
<dbReference type="SUPFAM" id="SSF50630">
    <property type="entry name" value="Acid proteases"/>
    <property type="match status" value="1"/>
</dbReference>
<dbReference type="PROSITE" id="PS00141">
    <property type="entry name" value="ASP_PROTEASE"/>
    <property type="match status" value="2"/>
</dbReference>
<dbReference type="PROSITE" id="PS51767">
    <property type="entry name" value="PEPTIDASE_A1"/>
    <property type="match status" value="1"/>
</dbReference>
<sequence length="620" mass="67137">MSPSSRFRNLVSVDSSSQDFGKRSSLYASLLDSASVSSLPGICSTAEDRDVEDESWKDPSSSSHCAKTEGGACAFPRLNQVLSSLRDPMGVFSRAKRRRSLGKAVGLSTSVICVVALFGIVCLCLYGLVNFSFTSVETSPLDDPRNSPVMGELGNPQASTPSSARADTPARHDRQNQMFSPWSVQNEQFLGEDSDALPHAGPLFRSGVMVMPLRKMKSLRRIGWDKNTITVPDLQAHLVAALRMQEGLSKKDDGNLSGLSDGDDISIHDYMNSQYYTEIYVGSPGQKVRVVVDTGSSDLWVCSASCGILLNILHKTYNHGKSDTYHADGTPYHVQYASGPVGGFLSADDVALASLKTKNFLLAEAVDLKGLGTAFFFGKFDGILGMGFPSLATKGLKPFMQAAVEQNVVKNWVFVFYLASANGVDGELAIGGVDQERFIGDINFSPVVDFRYWMINTKGLKSDGDLIAPTTKMIIDSGTSLIVGPLDEVKRIATMMGAFSVPLMPEGMFFISCEKAKVLRDLQLEIEGQDYPIKIKDLLISASAAAGTPCLFGMMGLKALEGGRPTPQKNGFGIFPPSQLVASAKGPIGRTWILGDLFMRNVYTVFDYDNKQIGFARLKN</sequence>
<gene>
    <name evidence="9" type="primary">ASP1</name>
</gene>
<reference evidence="12" key="1">
    <citation type="journal article" date="2004" name="Curr. Opin. Microbiol.">
        <title>Host cell invasion by the apicomplexans: the significance of microneme protein proteolysis.</title>
        <authorList>
            <person name="Dowse T."/>
            <person name="Soldati D."/>
        </authorList>
    </citation>
    <scope>NUCLEOTIDE SEQUENCE [MRNA]</scope>
    <source>
        <strain evidence="12">RH</strain>
    </source>
</reference>
<reference evidence="10" key="2">
    <citation type="journal article" date="2007" name="Traffic">
        <title>A family of aspartic proteases and a novel, dynamic and cell-cycle-dependent protease localization in the secretory pathway of Toxoplasma gondii.</title>
        <authorList>
            <person name="Shea M."/>
            <person name="Jaekle U."/>
            <person name="Liu Q."/>
            <person name="Berry C."/>
            <person name="Joiner K.A."/>
            <person name="Soldati-Favre D."/>
        </authorList>
    </citation>
    <scope>SUBCELLULAR LOCATION</scope>
    <scope>DEVELOPMENTAL STAGE</scope>
    <scope>PROTEOLYTIC CLEAVAGE</scope>
    <scope>TOPOLOGY</scope>
    <scope>MUTAGENESIS OF 27-TYR--LEU-31</scope>
    <source>
        <strain evidence="5">RH</strain>
    </source>
</reference>
<reference evidence="10" key="3">
    <citation type="journal article" date="2011" name="Exp. Parasitol.">
        <title>Toxoplasma gondii aspartic protease 1 is not essential in tachyzoites.</title>
        <authorList>
            <person name="Polonais V."/>
            <person name="Shea M."/>
            <person name="Soldati-Favre D."/>
        </authorList>
    </citation>
    <scope>FUNCTION</scope>
    <scope>SUBCELLULAR LOCATION</scope>
    <scope>DEVELOPMENTAL STAGE</scope>
    <scope>DISRUPTION PHENOTYPE</scope>
    <source>
        <strain evidence="6">RH</strain>
    </source>
</reference>
<reference evidence="10" key="4">
    <citation type="journal article" date="2020" name="MSphere">
        <title>Toxoplasma Cathepsin Protease B and Aspartyl Protease 1 Are Dispensable for Endolysosomal Protein Digestion.</title>
        <authorList>
            <person name="McDonald C."/>
            <person name="Smith D."/>
            <person name="Di Cristina M."/>
            <person name="Kannan G."/>
            <person name="Dou Z."/>
            <person name="Carruthers V.B."/>
        </authorList>
    </citation>
    <scope>FUNCTION</scope>
    <scope>SUBCELLULAR LOCATION</scope>
    <scope>DEVELOPMENTAL STAGE</scope>
    <scope>PROTEOLYTIC CLEAVAGE</scope>
    <scope>DISRUPTION PHENOTYPE</scope>
    <source>
        <strain evidence="7">RH</strain>
    </source>
</reference>
<comment type="function">
    <text evidence="6 7">Aspartyl protease which is dispensable for protein degradation in the vacuolar compartment (VAC) or for tachyzoite and bradyzoite viability.</text>
</comment>
<comment type="subcellular location">
    <subcellularLocation>
        <location evidence="5">Membrane</location>
        <topology evidence="5">Single-pass type II membrane protein</topology>
    </subcellularLocation>
    <subcellularLocation>
        <location evidence="5 6 7">Vacuole</location>
    </subcellularLocation>
    <text evidence="5 7">In non-dividing tachyzoites, localizes to punctate structures in the apical end of the parasite which correspond to a lysosome-like organelle known as the vacuolar compartment (VAC) (PubMed:17547703, PubMed:32051238). Does not localizes to secretory organelles, including micronemes, rhoptries and dense granules (PubMed:17547703). In dividing tachyzoites, transiently localizes to the nascent inner membrane complex (IMC) of daughter cells (PubMed:17547703).</text>
</comment>
<comment type="developmental stage">
    <text evidence="5 6 7">Expressed in tachyzoites (at protein level) (PubMed:17547703, PubMed:21616070, PubMed:32051238). Expressed in bradyzoites at higher levels (at protein level) (PubMed:32051238).</text>
</comment>
<comment type="PTM">
    <text evidence="5 7">Proteolytically cleaved into the soluble active mature form by, at least, cysteine protease CPL (PubMed:17547703, PubMed:32051238). Undergoes at least four processing steps; the first cleavage removes the propeptide resulting in the production of a soluble 45 kDa protein, which is further processed into a 35 kDa form followed by an additional processing into the final active 30 kDa form (PubMed:17547703, PubMed:32051238).</text>
</comment>
<comment type="disruption phenotype">
    <text evidence="6 7">No defect in tachyzoite replication (PubMed:21616070, PubMed:32051238). Food ingestion and turnover of autophagosomes are normal (PubMed:32051238). Normal tachyzoites conversion into bradyzoites (PubMed:32051238). No defect in secretory organelles and inner membrane complex (IMC) biogenesis (PubMed:21616070). No defect in virulence in a BALB/c mouse infection model (PubMed:21616070).</text>
</comment>
<comment type="similarity">
    <text evidence="3">Belongs to the peptidase A1 family.</text>
</comment>
<evidence type="ECO:0000255" key="1"/>
<evidence type="ECO:0000255" key="2">
    <source>
        <dbReference type="PROSITE-ProRule" id="PRU01103"/>
    </source>
</evidence>
<evidence type="ECO:0000255" key="3">
    <source>
        <dbReference type="RuleBase" id="RU000454"/>
    </source>
</evidence>
<evidence type="ECO:0000256" key="4">
    <source>
        <dbReference type="SAM" id="MobiDB-lite"/>
    </source>
</evidence>
<evidence type="ECO:0000269" key="5">
    <source>
    </source>
</evidence>
<evidence type="ECO:0000269" key="6">
    <source>
    </source>
</evidence>
<evidence type="ECO:0000269" key="7">
    <source>
    </source>
</evidence>
<evidence type="ECO:0000303" key="8">
    <source>
    </source>
</evidence>
<evidence type="ECO:0000303" key="9">
    <source>
    </source>
</evidence>
<evidence type="ECO:0000305" key="10"/>
<evidence type="ECO:0000305" key="11">
    <source>
    </source>
</evidence>
<evidence type="ECO:0000312" key="12">
    <source>
        <dbReference type="EMBL" id="AAS90335.1"/>
    </source>
</evidence>
<organism evidence="12">
    <name type="scientific">Toxoplasma gondii</name>
    <dbReference type="NCBI Taxonomy" id="5811"/>
    <lineage>
        <taxon>Eukaryota</taxon>
        <taxon>Sar</taxon>
        <taxon>Alveolata</taxon>
        <taxon>Apicomplexa</taxon>
        <taxon>Conoidasida</taxon>
        <taxon>Coccidia</taxon>
        <taxon>Eucoccidiorida</taxon>
        <taxon>Eimeriorina</taxon>
        <taxon>Sarcocystidae</taxon>
        <taxon>Toxoplasma</taxon>
    </lineage>
</organism>
<accession>Q6PTV2</accession>
<keyword id="KW-0064">Aspartyl protease</keyword>
<keyword id="KW-1015">Disulfide bond</keyword>
<keyword id="KW-0378">Hydrolase</keyword>
<keyword id="KW-0472">Membrane</keyword>
<keyword id="KW-0645">Protease</keyword>
<keyword id="KW-0735">Signal-anchor</keyword>
<keyword id="KW-0812">Transmembrane</keyword>
<keyword id="KW-1133">Transmembrane helix</keyword>
<keyword id="KW-0926">Vacuole</keyword>
<keyword id="KW-0865">Zymogen</keyword>